<comment type="function">
    <text evidence="3 4">Transcriptional regulator (PubMed:33078707). Component of a feedback loop involving atfs-1, atgl-1 and hlh-11 (PubMed:33078707). Binds to the promoter of the atgl-1 lipase to negatively regulate the expression of atgl-1, and thereby promoting fat oxidation in response to mitochondrial stress and mitochondrial respiration in the intestine (PubMed:33078707). In addition, functions with atfs-1 to maintain lifespan (PubMed:33078707). May have a role in fertility and in positively regulating body size (PubMed:19855932).</text>
</comment>
<comment type="subcellular location">
    <subcellularLocation>
        <location evidence="1 4">Nucleus</location>
    </subcellularLocation>
</comment>
<comment type="alternative products">
    <event type="alternative splicing"/>
    <isoform>
        <id>P34474-1</id>
        <name evidence="7">b</name>
        <sequence type="displayed"/>
    </isoform>
    <isoform>
        <id>P34474-2</id>
        <name evidence="6">a</name>
        <sequence type="described" ref="VSP_020162"/>
    </isoform>
    <isoform>
        <id>P34474-4</id>
        <name evidence="8">d</name>
        <sequence type="described" ref="VSP_020161 VSP_020163"/>
    </isoform>
</comment>
<comment type="tissue specificity">
    <text evidence="3 4">Expressed in the pharynx, nerve cords, the H-shaped excretory cell, vulva muscles, and the anal depressor (at protein level) (PubMed:19855932). Expressed in the intestine (at protein level) (PubMed:19855932, PubMed:33078707). In males, it is also expressed in the spicules and hyp7 cells of the hypodermis (at protein level) (PubMed:19855932).</text>
</comment>
<evidence type="ECO:0000255" key="1">
    <source>
        <dbReference type="PROSITE-ProRule" id="PRU00981"/>
    </source>
</evidence>
<evidence type="ECO:0000256" key="2">
    <source>
        <dbReference type="SAM" id="MobiDB-lite"/>
    </source>
</evidence>
<evidence type="ECO:0000269" key="3">
    <source>
    </source>
</evidence>
<evidence type="ECO:0000269" key="4">
    <source>
    </source>
</evidence>
<evidence type="ECO:0000305" key="5"/>
<evidence type="ECO:0000312" key="6">
    <source>
        <dbReference type="WormBase" id="F58A4.7a"/>
    </source>
</evidence>
<evidence type="ECO:0000312" key="7">
    <source>
        <dbReference type="WormBase" id="F58A4.7b"/>
    </source>
</evidence>
<evidence type="ECO:0000312" key="8">
    <source>
        <dbReference type="WormBase" id="F58A4.7d"/>
    </source>
</evidence>
<organism>
    <name type="scientific">Caenorhabditis elegans</name>
    <dbReference type="NCBI Taxonomy" id="6239"/>
    <lineage>
        <taxon>Eukaryota</taxon>
        <taxon>Metazoa</taxon>
        <taxon>Ecdysozoa</taxon>
        <taxon>Nematoda</taxon>
        <taxon>Chromadorea</taxon>
        <taxon>Rhabditida</taxon>
        <taxon>Rhabditina</taxon>
        <taxon>Rhabditomorpha</taxon>
        <taxon>Rhabditoidea</taxon>
        <taxon>Rhabditidae</taxon>
        <taxon>Peloderinae</taxon>
        <taxon>Caenorhabditis</taxon>
    </lineage>
</organism>
<name>HLH11_CAEEL</name>
<dbReference type="EMBL" id="BX284603">
    <property type="protein sequence ID" value="CAA80167.2"/>
    <property type="molecule type" value="Genomic_DNA"/>
</dbReference>
<dbReference type="EMBL" id="BX284603">
    <property type="protein sequence ID" value="CAA80170.2"/>
    <property type="molecule type" value="Genomic_DNA"/>
</dbReference>
<dbReference type="EMBL" id="BX284603">
    <property type="protein sequence ID" value="CAD91636.1"/>
    <property type="molecule type" value="Genomic_DNA"/>
</dbReference>
<dbReference type="PIR" id="B88561">
    <property type="entry name" value="B88561"/>
</dbReference>
<dbReference type="PIR" id="S40979">
    <property type="entry name" value="S40979"/>
</dbReference>
<dbReference type="RefSeq" id="NP_001022627.1">
    <property type="nucleotide sequence ID" value="NM_001027456.3"/>
</dbReference>
<dbReference type="RefSeq" id="NP_001367058.1">
    <molecule id="P34474-4"/>
    <property type="nucleotide sequence ID" value="NM_001379865.2"/>
</dbReference>
<dbReference type="RefSeq" id="NP_499129.2">
    <molecule id="P34474-1"/>
    <property type="nucleotide sequence ID" value="NM_066728.5"/>
</dbReference>
<dbReference type="RefSeq" id="NP_499130.2">
    <molecule id="P34474-2"/>
    <property type="nucleotide sequence ID" value="NM_066729.6"/>
</dbReference>
<dbReference type="SMR" id="P34474"/>
<dbReference type="BioGRID" id="41555">
    <property type="interactions" value="7"/>
</dbReference>
<dbReference type="FunCoup" id="P34474">
    <property type="interactions" value="145"/>
</dbReference>
<dbReference type="IntAct" id="P34474">
    <property type="interactions" value="6"/>
</dbReference>
<dbReference type="STRING" id="6239.F58A4.7b.3"/>
<dbReference type="PaxDb" id="6239-F58A4.7b.1"/>
<dbReference type="EnsemblMetazoa" id="F58A4.7a.1">
    <molecule id="P34474-2"/>
    <property type="protein sequence ID" value="F58A4.7a.1"/>
    <property type="gene ID" value="WBGene00001955"/>
</dbReference>
<dbReference type="EnsemblMetazoa" id="F58A4.7a.2">
    <molecule id="P34474-2"/>
    <property type="protein sequence ID" value="F58A4.7a.2"/>
    <property type="gene ID" value="WBGene00001955"/>
</dbReference>
<dbReference type="EnsemblMetazoa" id="F58A4.7b.1">
    <molecule id="P34474-1"/>
    <property type="protein sequence ID" value="F58A4.7b.1"/>
    <property type="gene ID" value="WBGene00001955"/>
</dbReference>
<dbReference type="EnsemblMetazoa" id="F58A4.7b.2">
    <molecule id="P34474-1"/>
    <property type="protein sequence ID" value="F58A4.7b.2"/>
    <property type="gene ID" value="WBGene00001955"/>
</dbReference>
<dbReference type="EnsemblMetazoa" id="F58A4.7b.3">
    <molecule id="P34474-1"/>
    <property type="protein sequence ID" value="F58A4.7b.3"/>
    <property type="gene ID" value="WBGene00001955"/>
</dbReference>
<dbReference type="EnsemblMetazoa" id="F58A4.7b.4">
    <molecule id="P34474-1"/>
    <property type="protein sequence ID" value="F58A4.7b.4"/>
    <property type="gene ID" value="WBGene00001955"/>
</dbReference>
<dbReference type="EnsemblMetazoa" id="F58A4.7d.1">
    <molecule id="P34474-4"/>
    <property type="protein sequence ID" value="F58A4.7d.1"/>
    <property type="gene ID" value="WBGene00001955"/>
</dbReference>
<dbReference type="EnsemblMetazoa" id="F58A4.7d.2">
    <molecule id="P34474-4"/>
    <property type="protein sequence ID" value="F58A4.7d.2"/>
    <property type="gene ID" value="WBGene00001955"/>
</dbReference>
<dbReference type="GeneID" id="176360"/>
<dbReference type="KEGG" id="cel:CELE_F58A4.7"/>
<dbReference type="UCSC" id="F58A4.7a.1">
    <molecule id="P34474-1"/>
    <property type="organism name" value="c. elegans"/>
</dbReference>
<dbReference type="AGR" id="WB:WBGene00001955"/>
<dbReference type="CTD" id="176360"/>
<dbReference type="WormBase" id="F58A4.7a">
    <molecule id="P34474-2"/>
    <property type="protein sequence ID" value="CE32193"/>
    <property type="gene ID" value="WBGene00001955"/>
    <property type="gene designation" value="hlh-11"/>
</dbReference>
<dbReference type="WormBase" id="F58A4.7b">
    <molecule id="P34474-1"/>
    <property type="protein sequence ID" value="CE32194"/>
    <property type="gene ID" value="WBGene00001955"/>
    <property type="gene designation" value="hlh-11"/>
</dbReference>
<dbReference type="WormBase" id="F58A4.7d">
    <molecule id="P34474-4"/>
    <property type="protein sequence ID" value="CE34038"/>
    <property type="gene ID" value="WBGene00001955"/>
    <property type="gene designation" value="hlh-11"/>
</dbReference>
<dbReference type="eggNOG" id="KOG0561">
    <property type="taxonomic scope" value="Eukaryota"/>
</dbReference>
<dbReference type="GeneTree" id="ENSGT00390000015189"/>
<dbReference type="HOGENOM" id="CLU_634967_0_0_1"/>
<dbReference type="InParanoid" id="P34474"/>
<dbReference type="OMA" id="TIGHAPM"/>
<dbReference type="OrthoDB" id="10029128at2759"/>
<dbReference type="PRO" id="PR:P34474"/>
<dbReference type="Proteomes" id="UP000001940">
    <property type="component" value="Chromosome III"/>
</dbReference>
<dbReference type="Bgee" id="WBGene00001955">
    <property type="expression patterns" value="Expressed in larva and 4 other cell types or tissues"/>
</dbReference>
<dbReference type="GO" id="GO:0005634">
    <property type="term" value="C:nucleus"/>
    <property type="evidence" value="ECO:0000318"/>
    <property type="project" value="GO_Central"/>
</dbReference>
<dbReference type="GO" id="GO:0000981">
    <property type="term" value="F:DNA-binding transcription factor activity, RNA polymerase II-specific"/>
    <property type="evidence" value="ECO:0000318"/>
    <property type="project" value="GO_Central"/>
</dbReference>
<dbReference type="GO" id="GO:0046983">
    <property type="term" value="F:protein dimerization activity"/>
    <property type="evidence" value="ECO:0007669"/>
    <property type="project" value="InterPro"/>
</dbReference>
<dbReference type="GO" id="GO:0000978">
    <property type="term" value="F:RNA polymerase II cis-regulatory region sequence-specific DNA binding"/>
    <property type="evidence" value="ECO:0000318"/>
    <property type="project" value="GO_Central"/>
</dbReference>
<dbReference type="GO" id="GO:0006357">
    <property type="term" value="P:regulation of transcription by RNA polymerase II"/>
    <property type="evidence" value="ECO:0000318"/>
    <property type="project" value="GO_Central"/>
</dbReference>
<dbReference type="CDD" id="cd11419">
    <property type="entry name" value="bHLHzip_TFAP4"/>
    <property type="match status" value="1"/>
</dbReference>
<dbReference type="FunFam" id="4.10.280.10:FF:000127">
    <property type="entry name" value="Helix-loop-helix protein 11"/>
    <property type="match status" value="1"/>
</dbReference>
<dbReference type="Gene3D" id="4.10.280.10">
    <property type="entry name" value="Helix-loop-helix DNA-binding domain"/>
    <property type="match status" value="1"/>
</dbReference>
<dbReference type="InterPro" id="IPR011598">
    <property type="entry name" value="bHLH_dom"/>
</dbReference>
<dbReference type="InterPro" id="IPR036638">
    <property type="entry name" value="HLH_DNA-bd_sf"/>
</dbReference>
<dbReference type="InterPro" id="IPR052207">
    <property type="entry name" value="Max-like/E-box_TFs"/>
</dbReference>
<dbReference type="PANTHER" id="PTHR15741">
    <property type="entry name" value="BASIC HELIX-LOOP-HELIX ZIP TRANSCRIPTION FACTOR"/>
    <property type="match status" value="1"/>
</dbReference>
<dbReference type="PANTHER" id="PTHR15741:SF27">
    <property type="entry name" value="TRANSCRIPTION FACTOR AP-4"/>
    <property type="match status" value="1"/>
</dbReference>
<dbReference type="Pfam" id="PF00010">
    <property type="entry name" value="HLH"/>
    <property type="match status" value="1"/>
</dbReference>
<dbReference type="SMART" id="SM00353">
    <property type="entry name" value="HLH"/>
    <property type="match status" value="1"/>
</dbReference>
<dbReference type="SUPFAM" id="SSF47459">
    <property type="entry name" value="HLH, helix-loop-helix DNA-binding domain"/>
    <property type="match status" value="1"/>
</dbReference>
<dbReference type="PROSITE" id="PS50888">
    <property type="entry name" value="BHLH"/>
    <property type="match status" value="1"/>
</dbReference>
<gene>
    <name evidence="7" type="primary">hlh-11</name>
    <name evidence="7" type="ORF">F58A4.7</name>
</gene>
<feature type="chain" id="PRO_0000127509" description="Helix-loop-helix protein 11">
    <location>
        <begin position="1"/>
        <end position="431"/>
    </location>
</feature>
<feature type="domain" description="bHLH" evidence="1">
    <location>
        <begin position="112"/>
        <end position="163"/>
    </location>
</feature>
<feature type="region of interest" description="Disordered" evidence="2">
    <location>
        <begin position="88"/>
        <end position="109"/>
    </location>
</feature>
<feature type="region of interest" description="Disordered" evidence="2">
    <location>
        <begin position="226"/>
        <end position="311"/>
    </location>
</feature>
<feature type="compositionally biased region" description="Polar residues" evidence="2">
    <location>
        <begin position="91"/>
        <end position="103"/>
    </location>
</feature>
<feature type="compositionally biased region" description="Polar residues" evidence="2">
    <location>
        <begin position="226"/>
        <end position="241"/>
    </location>
</feature>
<feature type="compositionally biased region" description="Polar residues" evidence="2">
    <location>
        <begin position="248"/>
        <end position="257"/>
    </location>
</feature>
<feature type="compositionally biased region" description="Low complexity" evidence="2">
    <location>
        <begin position="274"/>
        <end position="291"/>
    </location>
</feature>
<feature type="splice variant" id="VSP_020161" description="In isoform d." evidence="5">
    <original>RSRMRRQIANCNERRRMQSINAGFLALR</original>
    <variation>SIDPECVGKLPIATSGGGCRASMRDSWL</variation>
    <location>
        <begin position="109"/>
        <end position="136"/>
    </location>
</feature>
<feature type="splice variant" id="VSP_020162" description="In isoform a." evidence="5">
    <location>
        <begin position="110"/>
        <end position="111"/>
    </location>
</feature>
<feature type="splice variant" id="VSP_020163" description="In isoform d." evidence="5">
    <location>
        <begin position="137"/>
        <end position="431"/>
    </location>
</feature>
<feature type="mutagenesis site" description="In jh139; reduces brood size and body length." evidence="3">
    <location>
        <begin position="112"/>
        <end position="389"/>
    </location>
</feature>
<reference key="1">
    <citation type="journal article" date="1994" name="Nature">
        <title>2.2 Mb of contiguous nucleotide sequence from chromosome III of C. elegans.</title>
        <authorList>
            <person name="Wilson R."/>
            <person name="Ainscough R."/>
            <person name="Anderson K."/>
            <person name="Baynes C."/>
            <person name="Berks M."/>
            <person name="Bonfield J."/>
            <person name="Burton J."/>
            <person name="Connell M."/>
            <person name="Copsey T."/>
            <person name="Cooper J."/>
            <person name="Coulson A."/>
            <person name="Craxton M."/>
            <person name="Dear S."/>
            <person name="Du Z."/>
            <person name="Durbin R."/>
            <person name="Favello A."/>
            <person name="Fraser A."/>
            <person name="Fulton L."/>
            <person name="Gardner A."/>
            <person name="Green P."/>
            <person name="Hawkins T."/>
            <person name="Hillier L."/>
            <person name="Jier M."/>
            <person name="Johnston L."/>
            <person name="Jones M."/>
            <person name="Kershaw J."/>
            <person name="Kirsten J."/>
            <person name="Laisster N."/>
            <person name="Latreille P."/>
            <person name="Lightning J."/>
            <person name="Lloyd C."/>
            <person name="Mortimore B."/>
            <person name="O'Callaghan M."/>
            <person name="Parsons J."/>
            <person name="Percy C."/>
            <person name="Rifken L."/>
            <person name="Roopra A."/>
            <person name="Saunders D."/>
            <person name="Shownkeen R."/>
            <person name="Sims M."/>
            <person name="Smaldon N."/>
            <person name="Smith A."/>
            <person name="Smith M."/>
            <person name="Sonnhammer E."/>
            <person name="Staden R."/>
            <person name="Sulston J."/>
            <person name="Thierry-Mieg J."/>
            <person name="Thomas K."/>
            <person name="Vaudin M."/>
            <person name="Vaughan K."/>
            <person name="Waterston R."/>
            <person name="Watson A."/>
            <person name="Weinstock L."/>
            <person name="Wilkinson-Sproat J."/>
            <person name="Wohldman P."/>
        </authorList>
    </citation>
    <scope>NUCLEOTIDE SEQUENCE [LARGE SCALE GENOMIC DNA]</scope>
    <source>
        <strain>Bristol N2</strain>
    </source>
</reference>
<reference key="2">
    <citation type="journal article" date="1998" name="Science">
        <title>Genome sequence of the nematode C. elegans: a platform for investigating biology.</title>
        <authorList>
            <consortium name="The C. elegans sequencing consortium"/>
        </authorList>
    </citation>
    <scope>NUCLEOTIDE SEQUENCE [LARGE SCALE GENOMIC DNA]</scope>
    <source>
        <strain>Bristol N2</strain>
    </source>
</reference>
<reference key="3">
    <citation type="journal article" date="2009" name="Mol. Cells">
        <title>Identification and characterization of a putative basic helix-loop-helix (bHLH) transcription factor interacting with calcineurin in C. elegans.</title>
        <authorList>
            <person name="Lee S.U."/>
            <person name="Song H.O."/>
            <person name="Lee W."/>
            <person name="Singaravelu G."/>
            <person name="Yu J.R."/>
            <person name="Park W.Y."/>
        </authorList>
    </citation>
    <scope>FUNCTION</scope>
    <scope>TISSUE SPECIFICITY</scope>
    <scope>MUTAGENESIS OF 112-MET--VAL-389</scope>
</reference>
<reference key="4">
    <citation type="journal article" date="2020" name="Elife">
        <title>A feedback loop governs the relationship between lipid metabolism and longevity.</title>
        <authorList>
            <person name="Littlejohn N.K."/>
            <person name="Seban N."/>
            <person name="Liu C.C."/>
            <person name="Srinivasan S."/>
        </authorList>
    </citation>
    <scope>FUNCTION</scope>
    <scope>SUBCELLULAR LOCATION</scope>
    <scope>TISSUE SPECIFICITY</scope>
</reference>
<protein>
    <recommendedName>
        <fullName>Helix-loop-helix protein 11</fullName>
    </recommendedName>
</protein>
<keyword id="KW-0025">Alternative splicing</keyword>
<keyword id="KW-0238">DNA-binding</keyword>
<keyword id="KW-0539">Nucleus</keyword>
<keyword id="KW-1185">Reference proteome</keyword>
<keyword id="KW-0804">Transcription</keyword>
<keyword id="KW-0805">Transcription regulation</keyword>
<sequence>MVRSDSAEEDQIIIDDGFDLTEEDEEMMSSGTGALPVTIADWNSVTNARMAPPSIMSAASAFDLTASGMQNSLRSVLPTSTIGHAPMLANRSLSQPAPLSPTSLDPDRRSRMRRQIANCNERRRMQSINAGFLALRALLPRKEGEKLSKAAILQQTADMVHQLLGHKGEDIPDGGEPKKLKLEEDHHDADHQAQIAHLQTILETERAARKALESQVIQLRELLQMTTTSSQASSPVTPRSNGSGGFTLPSSYASSALPTPLRESPERKPSFQDTTSTPLSLLTLNGSPTSSESLASQRIFHPPPTLPSLETTVIRPTPLPPISVEISSPSLSTPSPLTAAPIIFSTAVPTQSSILFQTAAAAVTSAMSTGNSTPVALPHHLQGHNSAFVSTQPSLTLSQSMQTIVEAIRHLEGSHFIPTSPPPTSQTSLVR</sequence>
<proteinExistence type="evidence at protein level"/>
<accession>P34474</accession>
<accession>Q7JMU4</accession>
<accession>Q7YXC9</accession>
<accession>Q86DA4</accession>
<accession>Q9U3E1</accession>